<protein>
    <recommendedName>
        <fullName evidence="1">UDP-N-acetylmuramate--L-alanine ligase</fullName>
        <ecNumber evidence="1">6.3.2.8</ecNumber>
    </recommendedName>
    <alternativeName>
        <fullName evidence="1">UDP-N-acetylmuramoyl-L-alanine synthetase</fullName>
    </alternativeName>
</protein>
<feature type="chain" id="PRO_0000242598" description="UDP-N-acetylmuramate--L-alanine ligase">
    <location>
        <begin position="1"/>
        <end position="437"/>
    </location>
</feature>
<feature type="binding site" evidence="1">
    <location>
        <begin position="108"/>
        <end position="114"/>
    </location>
    <ligand>
        <name>ATP</name>
        <dbReference type="ChEBI" id="CHEBI:30616"/>
    </ligand>
</feature>
<comment type="function">
    <text evidence="1">Cell wall formation.</text>
</comment>
<comment type="catalytic activity">
    <reaction evidence="1">
        <text>UDP-N-acetyl-alpha-D-muramate + L-alanine + ATP = UDP-N-acetyl-alpha-D-muramoyl-L-alanine + ADP + phosphate + H(+)</text>
        <dbReference type="Rhea" id="RHEA:23372"/>
        <dbReference type="ChEBI" id="CHEBI:15378"/>
        <dbReference type="ChEBI" id="CHEBI:30616"/>
        <dbReference type="ChEBI" id="CHEBI:43474"/>
        <dbReference type="ChEBI" id="CHEBI:57972"/>
        <dbReference type="ChEBI" id="CHEBI:70757"/>
        <dbReference type="ChEBI" id="CHEBI:83898"/>
        <dbReference type="ChEBI" id="CHEBI:456216"/>
        <dbReference type="EC" id="6.3.2.8"/>
    </reaction>
</comment>
<comment type="pathway">
    <text evidence="1">Cell wall biogenesis; peptidoglycan biosynthesis.</text>
</comment>
<comment type="subcellular location">
    <subcellularLocation>
        <location evidence="1">Cytoplasm</location>
    </subcellularLocation>
</comment>
<comment type="similarity">
    <text evidence="1">Belongs to the MurCDEF family.</text>
</comment>
<organism>
    <name type="scientific">Staphylococcus aureus (strain USA300)</name>
    <dbReference type="NCBI Taxonomy" id="367830"/>
    <lineage>
        <taxon>Bacteria</taxon>
        <taxon>Bacillati</taxon>
        <taxon>Bacillota</taxon>
        <taxon>Bacilli</taxon>
        <taxon>Bacillales</taxon>
        <taxon>Staphylococcaceae</taxon>
        <taxon>Staphylococcus</taxon>
    </lineage>
</organism>
<dbReference type="EC" id="6.3.2.8" evidence="1"/>
<dbReference type="EMBL" id="CP000255">
    <property type="protein sequence ID" value="ABD20412.1"/>
    <property type="molecule type" value="Genomic_DNA"/>
</dbReference>
<dbReference type="RefSeq" id="WP_000150168.1">
    <property type="nucleotide sequence ID" value="NZ_CP027476.1"/>
</dbReference>
<dbReference type="SMR" id="Q2FFZ8"/>
<dbReference type="KEGG" id="saa:SAUSA300_1686"/>
<dbReference type="HOGENOM" id="CLU_028104_1_0_9"/>
<dbReference type="OMA" id="DITYQLR"/>
<dbReference type="UniPathway" id="UPA00219"/>
<dbReference type="Proteomes" id="UP000001939">
    <property type="component" value="Chromosome"/>
</dbReference>
<dbReference type="GO" id="GO:0005737">
    <property type="term" value="C:cytoplasm"/>
    <property type="evidence" value="ECO:0007669"/>
    <property type="project" value="UniProtKB-SubCell"/>
</dbReference>
<dbReference type="GO" id="GO:0005524">
    <property type="term" value="F:ATP binding"/>
    <property type="evidence" value="ECO:0007669"/>
    <property type="project" value="UniProtKB-UniRule"/>
</dbReference>
<dbReference type="GO" id="GO:0008763">
    <property type="term" value="F:UDP-N-acetylmuramate-L-alanine ligase activity"/>
    <property type="evidence" value="ECO:0007669"/>
    <property type="project" value="UniProtKB-UniRule"/>
</dbReference>
<dbReference type="GO" id="GO:0051301">
    <property type="term" value="P:cell division"/>
    <property type="evidence" value="ECO:0007669"/>
    <property type="project" value="UniProtKB-KW"/>
</dbReference>
<dbReference type="GO" id="GO:0071555">
    <property type="term" value="P:cell wall organization"/>
    <property type="evidence" value="ECO:0007669"/>
    <property type="project" value="UniProtKB-KW"/>
</dbReference>
<dbReference type="GO" id="GO:0009252">
    <property type="term" value="P:peptidoglycan biosynthetic process"/>
    <property type="evidence" value="ECO:0007669"/>
    <property type="project" value="UniProtKB-UniRule"/>
</dbReference>
<dbReference type="GO" id="GO:0008360">
    <property type="term" value="P:regulation of cell shape"/>
    <property type="evidence" value="ECO:0007669"/>
    <property type="project" value="UniProtKB-KW"/>
</dbReference>
<dbReference type="Gene3D" id="3.90.190.20">
    <property type="entry name" value="Mur ligase, C-terminal domain"/>
    <property type="match status" value="1"/>
</dbReference>
<dbReference type="Gene3D" id="3.40.1190.10">
    <property type="entry name" value="Mur-like, catalytic domain"/>
    <property type="match status" value="1"/>
</dbReference>
<dbReference type="Gene3D" id="3.40.50.720">
    <property type="entry name" value="NAD(P)-binding Rossmann-like Domain"/>
    <property type="match status" value="1"/>
</dbReference>
<dbReference type="HAMAP" id="MF_00046">
    <property type="entry name" value="MurC"/>
    <property type="match status" value="1"/>
</dbReference>
<dbReference type="InterPro" id="IPR036565">
    <property type="entry name" value="Mur-like_cat_sf"/>
</dbReference>
<dbReference type="InterPro" id="IPR004101">
    <property type="entry name" value="Mur_ligase_C"/>
</dbReference>
<dbReference type="InterPro" id="IPR036615">
    <property type="entry name" value="Mur_ligase_C_dom_sf"/>
</dbReference>
<dbReference type="InterPro" id="IPR013221">
    <property type="entry name" value="Mur_ligase_cen"/>
</dbReference>
<dbReference type="InterPro" id="IPR000713">
    <property type="entry name" value="Mur_ligase_N"/>
</dbReference>
<dbReference type="InterPro" id="IPR050061">
    <property type="entry name" value="MurCDEF_pg_biosynth"/>
</dbReference>
<dbReference type="InterPro" id="IPR005758">
    <property type="entry name" value="UDP-N-AcMur_Ala_ligase_MurC"/>
</dbReference>
<dbReference type="NCBIfam" id="TIGR01082">
    <property type="entry name" value="murC"/>
    <property type="match status" value="1"/>
</dbReference>
<dbReference type="PANTHER" id="PTHR43445:SF3">
    <property type="entry name" value="UDP-N-ACETYLMURAMATE--L-ALANINE LIGASE"/>
    <property type="match status" value="1"/>
</dbReference>
<dbReference type="PANTHER" id="PTHR43445">
    <property type="entry name" value="UDP-N-ACETYLMURAMATE--L-ALANINE LIGASE-RELATED"/>
    <property type="match status" value="1"/>
</dbReference>
<dbReference type="Pfam" id="PF01225">
    <property type="entry name" value="Mur_ligase"/>
    <property type="match status" value="1"/>
</dbReference>
<dbReference type="Pfam" id="PF02875">
    <property type="entry name" value="Mur_ligase_C"/>
    <property type="match status" value="1"/>
</dbReference>
<dbReference type="Pfam" id="PF08245">
    <property type="entry name" value="Mur_ligase_M"/>
    <property type="match status" value="1"/>
</dbReference>
<dbReference type="SUPFAM" id="SSF51984">
    <property type="entry name" value="MurCD N-terminal domain"/>
    <property type="match status" value="1"/>
</dbReference>
<dbReference type="SUPFAM" id="SSF53623">
    <property type="entry name" value="MurD-like peptide ligases, catalytic domain"/>
    <property type="match status" value="1"/>
</dbReference>
<dbReference type="SUPFAM" id="SSF53244">
    <property type="entry name" value="MurD-like peptide ligases, peptide-binding domain"/>
    <property type="match status" value="1"/>
</dbReference>
<evidence type="ECO:0000255" key="1">
    <source>
        <dbReference type="HAMAP-Rule" id="MF_00046"/>
    </source>
</evidence>
<keyword id="KW-0067">ATP-binding</keyword>
<keyword id="KW-0131">Cell cycle</keyword>
<keyword id="KW-0132">Cell division</keyword>
<keyword id="KW-0133">Cell shape</keyword>
<keyword id="KW-0961">Cell wall biogenesis/degradation</keyword>
<keyword id="KW-0963">Cytoplasm</keyword>
<keyword id="KW-0436">Ligase</keyword>
<keyword id="KW-0547">Nucleotide-binding</keyword>
<keyword id="KW-0573">Peptidoglycan synthesis</keyword>
<reference key="1">
    <citation type="journal article" date="2006" name="Lancet">
        <title>Complete genome sequence of USA300, an epidemic clone of community-acquired meticillin-resistant Staphylococcus aureus.</title>
        <authorList>
            <person name="Diep B.A."/>
            <person name="Gill S.R."/>
            <person name="Chang R.F."/>
            <person name="Phan T.H."/>
            <person name="Chen J.H."/>
            <person name="Davidson M.G."/>
            <person name="Lin F."/>
            <person name="Lin J."/>
            <person name="Carleton H.A."/>
            <person name="Mongodin E.F."/>
            <person name="Sensabaugh G.F."/>
            <person name="Perdreau-Remington F."/>
        </authorList>
    </citation>
    <scope>NUCLEOTIDE SEQUENCE [LARGE SCALE GENOMIC DNA]</scope>
    <source>
        <strain>USA300</strain>
    </source>
</reference>
<gene>
    <name evidence="1" type="primary">murC</name>
    <name type="ordered locus">SAUSA300_1686</name>
</gene>
<accession>Q2FFZ8</accession>
<proteinExistence type="inferred from homology"/>
<name>MURC_STAA3</name>
<sequence length="437" mass="49188">MTHYHFVGIKGSGMSSLAQIMHDLGHEVQGSDIENYVFTEVALRNKGIKILPFDANNIKEDMVVIQGNAFASSHEEIVRAHQLKLDVVSYNDFLGQIIDQYTSVAVTGAHGKTSTTGLLSHVMNGDKKTSFLIGDGTGMGLPESDYFAFEACEYRRHFLSYKPDYAIMTNIDFDHPDYFKDINDVFDAFQEMAHNVKKGIIAWGDDEHLRKIEADVPIYYYGFKDSDDIYAQNIQITDKGTAFDVYVDGEFYDHFLSPQYGDHTVLNALAVIAISYLEKLDVTNIKEALETFGGVKRRFNETTIANQVIVDDYAHHPREISATIETARKKYPHKEVVAVFQPHTFSRTQAFLNEFAESLSKADRVFLCEIFGSIRENTGALTIQDLIDKIEGASLINEDSINVLEQFDNAVILFMGAGDIQKLQNAYLDKLGMKNAF</sequence>